<comment type="function">
    <text evidence="1">Endonuclease that specifically degrades the RNA of RNA-DNA hybrids.</text>
</comment>
<comment type="catalytic activity">
    <reaction evidence="1">
        <text>Endonucleolytic cleavage to 5'-phosphomonoester.</text>
        <dbReference type="EC" id="3.1.26.4"/>
    </reaction>
</comment>
<comment type="cofactor">
    <cofactor evidence="1">
        <name>Mg(2+)</name>
        <dbReference type="ChEBI" id="CHEBI:18420"/>
    </cofactor>
    <text evidence="1">Binds 1 Mg(2+) ion per subunit. May bind a second metal ion at a regulatory site, or after substrate binding.</text>
</comment>
<comment type="subunit">
    <text evidence="1">Monomer.</text>
</comment>
<comment type="subcellular location">
    <subcellularLocation>
        <location evidence="1">Cytoplasm</location>
    </subcellularLocation>
</comment>
<comment type="similarity">
    <text evidence="1">Belongs to the RNase H family.</text>
</comment>
<name>RNH_RALN1</name>
<sequence>MQEVTVYSDGACKGNPGLGGWGTVLVSGGHEKELFGGEAVTTNNRMELMAVIEAFRALKRPCRVKVYTDSQYVQKGISEWLAGWKARGWKTADKKPVKNDDLWRTLDELVVTHEVSWHWVKGHAGHPGNERADALANKGVEIARQAIQAGA</sequence>
<reference key="1">
    <citation type="journal article" date="2002" name="Nature">
        <title>Genome sequence of the plant pathogen Ralstonia solanacearum.</title>
        <authorList>
            <person name="Salanoubat M."/>
            <person name="Genin S."/>
            <person name="Artiguenave F."/>
            <person name="Gouzy J."/>
            <person name="Mangenot S."/>
            <person name="Arlat M."/>
            <person name="Billault A."/>
            <person name="Brottier P."/>
            <person name="Camus J.-C."/>
            <person name="Cattolico L."/>
            <person name="Chandler M."/>
            <person name="Choisne N."/>
            <person name="Claudel-Renard C."/>
            <person name="Cunnac S."/>
            <person name="Demange N."/>
            <person name="Gaspin C."/>
            <person name="Lavie M."/>
            <person name="Moisan A."/>
            <person name="Robert C."/>
            <person name="Saurin W."/>
            <person name="Schiex T."/>
            <person name="Siguier P."/>
            <person name="Thebault P."/>
            <person name="Whalen M."/>
            <person name="Wincker P."/>
            <person name="Levy M."/>
            <person name="Weissenbach J."/>
            <person name="Boucher C.A."/>
        </authorList>
    </citation>
    <scope>NUCLEOTIDE SEQUENCE [LARGE SCALE GENOMIC DNA]</scope>
    <source>
        <strain>ATCC BAA-1114 / GMI1000</strain>
    </source>
</reference>
<organism>
    <name type="scientific">Ralstonia nicotianae (strain ATCC BAA-1114 / GMI1000)</name>
    <name type="common">Ralstonia solanacearum</name>
    <dbReference type="NCBI Taxonomy" id="267608"/>
    <lineage>
        <taxon>Bacteria</taxon>
        <taxon>Pseudomonadati</taxon>
        <taxon>Pseudomonadota</taxon>
        <taxon>Betaproteobacteria</taxon>
        <taxon>Burkholderiales</taxon>
        <taxon>Burkholderiaceae</taxon>
        <taxon>Ralstonia</taxon>
        <taxon>Ralstonia solanacearum species complex</taxon>
    </lineage>
</organism>
<feature type="chain" id="PRO_0000195392" description="Ribonuclease H">
    <location>
        <begin position="1"/>
        <end position="151"/>
    </location>
</feature>
<feature type="domain" description="RNase H type-1" evidence="2">
    <location>
        <begin position="1"/>
        <end position="141"/>
    </location>
</feature>
<feature type="binding site" evidence="1">
    <location>
        <position position="9"/>
    </location>
    <ligand>
        <name>Mg(2+)</name>
        <dbReference type="ChEBI" id="CHEBI:18420"/>
        <label>1</label>
    </ligand>
</feature>
<feature type="binding site" evidence="1">
    <location>
        <position position="9"/>
    </location>
    <ligand>
        <name>Mg(2+)</name>
        <dbReference type="ChEBI" id="CHEBI:18420"/>
        <label>2</label>
    </ligand>
</feature>
<feature type="binding site" evidence="1">
    <location>
        <position position="47"/>
    </location>
    <ligand>
        <name>Mg(2+)</name>
        <dbReference type="ChEBI" id="CHEBI:18420"/>
        <label>1</label>
    </ligand>
</feature>
<feature type="binding site" evidence="1">
    <location>
        <position position="69"/>
    </location>
    <ligand>
        <name>Mg(2+)</name>
        <dbReference type="ChEBI" id="CHEBI:18420"/>
        <label>1</label>
    </ligand>
</feature>
<feature type="binding site" evidence="1">
    <location>
        <position position="133"/>
    </location>
    <ligand>
        <name>Mg(2+)</name>
        <dbReference type="ChEBI" id="CHEBI:18420"/>
        <label>2</label>
    </ligand>
</feature>
<keyword id="KW-0963">Cytoplasm</keyword>
<keyword id="KW-0255">Endonuclease</keyword>
<keyword id="KW-0378">Hydrolase</keyword>
<keyword id="KW-0460">Magnesium</keyword>
<keyword id="KW-0479">Metal-binding</keyword>
<keyword id="KW-0540">Nuclease</keyword>
<keyword id="KW-1185">Reference proteome</keyword>
<evidence type="ECO:0000255" key="1">
    <source>
        <dbReference type="HAMAP-Rule" id="MF_00042"/>
    </source>
</evidence>
<evidence type="ECO:0000255" key="2">
    <source>
        <dbReference type="PROSITE-ProRule" id="PRU00408"/>
    </source>
</evidence>
<accession>Q8XZ91</accession>
<dbReference type="EC" id="3.1.26.4" evidence="1"/>
<dbReference type="EMBL" id="AL646052">
    <property type="protein sequence ID" value="CAD15215.1"/>
    <property type="molecule type" value="Genomic_DNA"/>
</dbReference>
<dbReference type="RefSeq" id="WP_011001460.1">
    <property type="nucleotide sequence ID" value="NC_003295.1"/>
</dbReference>
<dbReference type="SMR" id="Q8XZ91"/>
<dbReference type="STRING" id="267608.RSc1513"/>
<dbReference type="EnsemblBacteria" id="CAD15215">
    <property type="protein sequence ID" value="CAD15215"/>
    <property type="gene ID" value="RSc1513"/>
</dbReference>
<dbReference type="KEGG" id="rso:RSc1513"/>
<dbReference type="eggNOG" id="COG0328">
    <property type="taxonomic scope" value="Bacteria"/>
</dbReference>
<dbReference type="HOGENOM" id="CLU_030894_6_0_4"/>
<dbReference type="Proteomes" id="UP000001436">
    <property type="component" value="Chromosome"/>
</dbReference>
<dbReference type="GO" id="GO:0005737">
    <property type="term" value="C:cytoplasm"/>
    <property type="evidence" value="ECO:0007669"/>
    <property type="project" value="UniProtKB-SubCell"/>
</dbReference>
<dbReference type="GO" id="GO:0000287">
    <property type="term" value="F:magnesium ion binding"/>
    <property type="evidence" value="ECO:0007669"/>
    <property type="project" value="UniProtKB-UniRule"/>
</dbReference>
<dbReference type="GO" id="GO:0003676">
    <property type="term" value="F:nucleic acid binding"/>
    <property type="evidence" value="ECO:0007669"/>
    <property type="project" value="InterPro"/>
</dbReference>
<dbReference type="GO" id="GO:0004523">
    <property type="term" value="F:RNA-DNA hybrid ribonuclease activity"/>
    <property type="evidence" value="ECO:0007669"/>
    <property type="project" value="UniProtKB-UniRule"/>
</dbReference>
<dbReference type="GO" id="GO:0043137">
    <property type="term" value="P:DNA replication, removal of RNA primer"/>
    <property type="evidence" value="ECO:0007669"/>
    <property type="project" value="TreeGrafter"/>
</dbReference>
<dbReference type="CDD" id="cd09278">
    <property type="entry name" value="RNase_HI_prokaryote_like"/>
    <property type="match status" value="1"/>
</dbReference>
<dbReference type="FunFam" id="3.30.420.10:FF:000089">
    <property type="entry name" value="Ribonuclease H"/>
    <property type="match status" value="1"/>
</dbReference>
<dbReference type="Gene3D" id="3.30.420.10">
    <property type="entry name" value="Ribonuclease H-like superfamily/Ribonuclease H"/>
    <property type="match status" value="1"/>
</dbReference>
<dbReference type="HAMAP" id="MF_00042">
    <property type="entry name" value="RNase_H"/>
    <property type="match status" value="1"/>
</dbReference>
<dbReference type="InterPro" id="IPR050092">
    <property type="entry name" value="RNase_H"/>
</dbReference>
<dbReference type="InterPro" id="IPR012337">
    <property type="entry name" value="RNaseH-like_sf"/>
</dbReference>
<dbReference type="InterPro" id="IPR002156">
    <property type="entry name" value="RNaseH_domain"/>
</dbReference>
<dbReference type="InterPro" id="IPR036397">
    <property type="entry name" value="RNaseH_sf"/>
</dbReference>
<dbReference type="InterPro" id="IPR022892">
    <property type="entry name" value="RNaseHI"/>
</dbReference>
<dbReference type="NCBIfam" id="NF001236">
    <property type="entry name" value="PRK00203.1"/>
    <property type="match status" value="1"/>
</dbReference>
<dbReference type="PANTHER" id="PTHR10642">
    <property type="entry name" value="RIBONUCLEASE H1"/>
    <property type="match status" value="1"/>
</dbReference>
<dbReference type="PANTHER" id="PTHR10642:SF26">
    <property type="entry name" value="RIBONUCLEASE H1"/>
    <property type="match status" value="1"/>
</dbReference>
<dbReference type="Pfam" id="PF00075">
    <property type="entry name" value="RNase_H"/>
    <property type="match status" value="1"/>
</dbReference>
<dbReference type="SUPFAM" id="SSF53098">
    <property type="entry name" value="Ribonuclease H-like"/>
    <property type="match status" value="1"/>
</dbReference>
<dbReference type="PROSITE" id="PS50879">
    <property type="entry name" value="RNASE_H_1"/>
    <property type="match status" value="1"/>
</dbReference>
<gene>
    <name evidence="1" type="primary">rnhA</name>
    <name type="ordered locus">RSc1513</name>
    <name type="ORF">RS03791</name>
</gene>
<protein>
    <recommendedName>
        <fullName evidence="1">Ribonuclease H</fullName>
        <shortName evidence="1">RNase H</shortName>
        <ecNumber evidence="1">3.1.26.4</ecNumber>
    </recommendedName>
</protein>
<proteinExistence type="inferred from homology"/>